<accession>B0BR13</accession>
<organism>
    <name type="scientific">Actinobacillus pleuropneumoniae serotype 3 (strain JL03)</name>
    <dbReference type="NCBI Taxonomy" id="434271"/>
    <lineage>
        <taxon>Bacteria</taxon>
        <taxon>Pseudomonadati</taxon>
        <taxon>Pseudomonadota</taxon>
        <taxon>Gammaproteobacteria</taxon>
        <taxon>Pasteurellales</taxon>
        <taxon>Pasteurellaceae</taxon>
        <taxon>Actinobacillus</taxon>
    </lineage>
</organism>
<proteinExistence type="inferred from homology"/>
<reference key="1">
    <citation type="journal article" date="2008" name="PLoS ONE">
        <title>Genome biology of Actinobacillus pleuropneumoniae JL03, an isolate of serotype 3 prevalent in China.</title>
        <authorList>
            <person name="Xu Z."/>
            <person name="Zhou Y."/>
            <person name="Li L."/>
            <person name="Zhou R."/>
            <person name="Xiao S."/>
            <person name="Wan Y."/>
            <person name="Zhang S."/>
            <person name="Wang K."/>
            <person name="Li W."/>
            <person name="Li L."/>
            <person name="Jin H."/>
            <person name="Kang M."/>
            <person name="Dalai B."/>
            <person name="Li T."/>
            <person name="Liu L."/>
            <person name="Cheng Y."/>
            <person name="Zhang L."/>
            <person name="Xu T."/>
            <person name="Zheng H."/>
            <person name="Pu S."/>
            <person name="Wang B."/>
            <person name="Gu W."/>
            <person name="Zhang X.L."/>
            <person name="Zhu G.-F."/>
            <person name="Wang S."/>
            <person name="Zhao G.-P."/>
            <person name="Chen H."/>
        </authorList>
    </citation>
    <scope>NUCLEOTIDE SEQUENCE [LARGE SCALE GENOMIC DNA]</scope>
    <source>
        <strain>JL03</strain>
    </source>
</reference>
<gene>
    <name evidence="1" type="primary">mqo</name>
    <name type="ordered locus">APJL_1446</name>
</gene>
<name>MQO_ACTPJ</name>
<evidence type="ECO:0000255" key="1">
    <source>
        <dbReference type="HAMAP-Rule" id="MF_00212"/>
    </source>
</evidence>
<comment type="catalytic activity">
    <reaction evidence="1">
        <text>(S)-malate + a quinone = a quinol + oxaloacetate</text>
        <dbReference type="Rhea" id="RHEA:46012"/>
        <dbReference type="ChEBI" id="CHEBI:15589"/>
        <dbReference type="ChEBI" id="CHEBI:16452"/>
        <dbReference type="ChEBI" id="CHEBI:24646"/>
        <dbReference type="ChEBI" id="CHEBI:132124"/>
        <dbReference type="EC" id="1.1.5.4"/>
    </reaction>
</comment>
<comment type="cofactor">
    <cofactor evidence="1">
        <name>FAD</name>
        <dbReference type="ChEBI" id="CHEBI:57692"/>
    </cofactor>
</comment>
<comment type="pathway">
    <text evidence="1">Carbohydrate metabolism; tricarboxylic acid cycle; oxaloacetate from (S)-malate (quinone route): step 1/1.</text>
</comment>
<comment type="similarity">
    <text evidence="1">Belongs to the MQO family.</text>
</comment>
<protein>
    <recommendedName>
        <fullName evidence="1">Probable malate:quinone oxidoreductase</fullName>
        <ecNumber evidence="1">1.1.5.4</ecNumber>
    </recommendedName>
    <alternativeName>
        <fullName evidence="1">MQO</fullName>
    </alternativeName>
    <alternativeName>
        <fullName evidence="1">Malate dehydrogenase [quinone]</fullName>
    </alternativeName>
</protein>
<dbReference type="EC" id="1.1.5.4" evidence="1"/>
<dbReference type="EMBL" id="CP000687">
    <property type="protein sequence ID" value="ABY69998.1"/>
    <property type="molecule type" value="Genomic_DNA"/>
</dbReference>
<dbReference type="RefSeq" id="WP_005602054.1">
    <property type="nucleotide sequence ID" value="NC_010278.1"/>
</dbReference>
<dbReference type="SMR" id="B0BR13"/>
<dbReference type="KEGG" id="apj:APJL_1446"/>
<dbReference type="HOGENOM" id="CLU_028151_0_0_6"/>
<dbReference type="UniPathway" id="UPA00223">
    <property type="reaction ID" value="UER01008"/>
</dbReference>
<dbReference type="Proteomes" id="UP000008547">
    <property type="component" value="Chromosome"/>
</dbReference>
<dbReference type="GO" id="GO:0047545">
    <property type="term" value="F:2-hydroxyglutarate dehydrogenase activity"/>
    <property type="evidence" value="ECO:0007669"/>
    <property type="project" value="TreeGrafter"/>
</dbReference>
<dbReference type="GO" id="GO:0008924">
    <property type="term" value="F:L-malate dehydrogenase (quinone) activity"/>
    <property type="evidence" value="ECO:0007669"/>
    <property type="project" value="UniProtKB-UniRule"/>
</dbReference>
<dbReference type="GO" id="GO:0006099">
    <property type="term" value="P:tricarboxylic acid cycle"/>
    <property type="evidence" value="ECO:0007669"/>
    <property type="project" value="UniProtKB-UniRule"/>
</dbReference>
<dbReference type="HAMAP" id="MF_00212">
    <property type="entry name" value="MQO"/>
    <property type="match status" value="1"/>
</dbReference>
<dbReference type="InterPro" id="IPR036188">
    <property type="entry name" value="FAD/NAD-bd_sf"/>
</dbReference>
<dbReference type="InterPro" id="IPR006231">
    <property type="entry name" value="MQO"/>
</dbReference>
<dbReference type="NCBIfam" id="TIGR01320">
    <property type="entry name" value="mal_quin_oxido"/>
    <property type="match status" value="1"/>
</dbReference>
<dbReference type="NCBIfam" id="NF003603">
    <property type="entry name" value="PRK05257.1-1"/>
    <property type="match status" value="1"/>
</dbReference>
<dbReference type="NCBIfam" id="NF003604">
    <property type="entry name" value="PRK05257.1-3"/>
    <property type="match status" value="1"/>
</dbReference>
<dbReference type="NCBIfam" id="NF003606">
    <property type="entry name" value="PRK05257.2-1"/>
    <property type="match status" value="1"/>
</dbReference>
<dbReference type="NCBIfam" id="NF003608">
    <property type="entry name" value="PRK05257.2-4"/>
    <property type="match status" value="1"/>
</dbReference>
<dbReference type="NCBIfam" id="NF003611">
    <property type="entry name" value="PRK05257.3-2"/>
    <property type="match status" value="1"/>
</dbReference>
<dbReference type="NCBIfam" id="NF009875">
    <property type="entry name" value="PRK13339.1"/>
    <property type="match status" value="1"/>
</dbReference>
<dbReference type="PANTHER" id="PTHR43104">
    <property type="entry name" value="L-2-HYDROXYGLUTARATE DEHYDROGENASE, MITOCHONDRIAL"/>
    <property type="match status" value="1"/>
</dbReference>
<dbReference type="PANTHER" id="PTHR43104:SF2">
    <property type="entry name" value="L-2-HYDROXYGLUTARATE DEHYDROGENASE, MITOCHONDRIAL"/>
    <property type="match status" value="1"/>
</dbReference>
<dbReference type="Pfam" id="PF06039">
    <property type="entry name" value="Mqo"/>
    <property type="match status" value="1"/>
</dbReference>
<dbReference type="SUPFAM" id="SSF51905">
    <property type="entry name" value="FAD/NAD(P)-binding domain"/>
    <property type="match status" value="1"/>
</dbReference>
<sequence>MQDSSSALESYSDVTLIGAGIMSGTLGAFLTELAPEKSLAIFEKLSAVGLESSNEWNNAGTGHSALCELNYTEQKADGEVSVERAVKICEDFQLSLQLWSYLVETGRIQAPREFIHRIPHISFVQGEQNAQFLQKRYQSLAQSHLFEGMQFSRDHQQLAQWMPLMMQNRDSNETLAASYIQYGTDVNFGELTRKLFDYLVKQKAELNLNHTVKNIQRLANGEWKLTVVDQQGQKRVHRSKFVFIGGGGGALPLLQKSGITDGKNVGGFPVSGLFMVCNNPEVIAKHNAKVYGKAKLGAPPMSVPHLDTRFIEGKQSLLFGPFAGFTLKFLKQGSVLDLPTSVTPTNFCSVTKAGIKNLPLAHYLMKQAMLTKAQRMADLREFVPDAKDEDWDVVVAGQRVQVIKGGEMRFGTEVIRAEDGSLAALLGASPGASTSVKAMLDVLVSCFAAELPQWQAKLTQMLPSYGKALRNEPQLYAQIKQRVDQVLALAN</sequence>
<feature type="chain" id="PRO_1000099867" description="Probable malate:quinone oxidoreductase">
    <location>
        <begin position="1"/>
        <end position="491"/>
    </location>
</feature>
<keyword id="KW-0274">FAD</keyword>
<keyword id="KW-0285">Flavoprotein</keyword>
<keyword id="KW-0560">Oxidoreductase</keyword>
<keyword id="KW-0816">Tricarboxylic acid cycle</keyword>